<feature type="chain" id="PRO_0000441612" description="Protein DMP5">
    <location>
        <begin position="1"/>
        <end position="219"/>
    </location>
</feature>
<feature type="transmembrane region" description="Helical" evidence="2">
    <location>
        <begin position="51"/>
        <end position="71"/>
    </location>
</feature>
<feature type="transmembrane region" description="Helical" evidence="2">
    <location>
        <begin position="82"/>
        <end position="102"/>
    </location>
</feature>
<feature type="transmembrane region" description="Helical" evidence="2">
    <location>
        <begin position="142"/>
        <end position="162"/>
    </location>
</feature>
<feature type="transmembrane region" description="Helical" evidence="2">
    <location>
        <begin position="182"/>
        <end position="202"/>
    </location>
</feature>
<feature type="region of interest" description="Disordered" evidence="3">
    <location>
        <begin position="1"/>
        <end position="24"/>
    </location>
</feature>
<keyword id="KW-0256">Endoplasmic reticulum</keyword>
<keyword id="KW-0472">Membrane</keyword>
<keyword id="KW-1185">Reference proteome</keyword>
<keyword id="KW-0812">Transmembrane</keyword>
<keyword id="KW-1133">Transmembrane helix</keyword>
<protein>
    <recommendedName>
        <fullName evidence="5">Protein DMP5</fullName>
        <shortName evidence="5">AtDMP5</shortName>
    </recommendedName>
</protein>
<accession>Q9M897</accession>
<evidence type="ECO:0000250" key="1">
    <source>
        <dbReference type="UniProtKB" id="Q9LVF4"/>
    </source>
</evidence>
<evidence type="ECO:0000255" key="2"/>
<evidence type="ECO:0000256" key="3">
    <source>
        <dbReference type="SAM" id="MobiDB-lite"/>
    </source>
</evidence>
<evidence type="ECO:0000269" key="4">
    <source>
    </source>
</evidence>
<evidence type="ECO:0000303" key="5">
    <source>
    </source>
</evidence>
<evidence type="ECO:0000305" key="6"/>
<evidence type="ECO:0000312" key="7">
    <source>
        <dbReference type="Araport" id="AT3G02430"/>
    </source>
</evidence>
<evidence type="ECO:0000312" key="8">
    <source>
        <dbReference type="EMBL" id="AAF32450.1"/>
    </source>
</evidence>
<reference key="1">
    <citation type="journal article" date="2000" name="Nature">
        <title>Sequence and analysis of chromosome 3 of the plant Arabidopsis thaliana.</title>
        <authorList>
            <person name="Salanoubat M."/>
            <person name="Lemcke K."/>
            <person name="Rieger M."/>
            <person name="Ansorge W."/>
            <person name="Unseld M."/>
            <person name="Fartmann B."/>
            <person name="Valle G."/>
            <person name="Bloecker H."/>
            <person name="Perez-Alonso M."/>
            <person name="Obermaier B."/>
            <person name="Delseny M."/>
            <person name="Boutry M."/>
            <person name="Grivell L.A."/>
            <person name="Mache R."/>
            <person name="Puigdomenech P."/>
            <person name="De Simone V."/>
            <person name="Choisne N."/>
            <person name="Artiguenave F."/>
            <person name="Robert C."/>
            <person name="Brottier P."/>
            <person name="Wincker P."/>
            <person name="Cattolico L."/>
            <person name="Weissenbach J."/>
            <person name="Saurin W."/>
            <person name="Quetier F."/>
            <person name="Schaefer M."/>
            <person name="Mueller-Auer S."/>
            <person name="Gabel C."/>
            <person name="Fuchs M."/>
            <person name="Benes V."/>
            <person name="Wurmbach E."/>
            <person name="Drzonek H."/>
            <person name="Erfle H."/>
            <person name="Jordan N."/>
            <person name="Bangert S."/>
            <person name="Wiedelmann R."/>
            <person name="Kranz H."/>
            <person name="Voss H."/>
            <person name="Holland R."/>
            <person name="Brandt P."/>
            <person name="Nyakatura G."/>
            <person name="Vezzi A."/>
            <person name="D'Angelo M."/>
            <person name="Pallavicini A."/>
            <person name="Toppo S."/>
            <person name="Simionati B."/>
            <person name="Conrad A."/>
            <person name="Hornischer K."/>
            <person name="Kauer G."/>
            <person name="Loehnert T.-H."/>
            <person name="Nordsiek G."/>
            <person name="Reichelt J."/>
            <person name="Scharfe M."/>
            <person name="Schoen O."/>
            <person name="Bargues M."/>
            <person name="Terol J."/>
            <person name="Climent J."/>
            <person name="Navarro P."/>
            <person name="Collado C."/>
            <person name="Perez-Perez A."/>
            <person name="Ottenwaelder B."/>
            <person name="Duchemin D."/>
            <person name="Cooke R."/>
            <person name="Laudie M."/>
            <person name="Berger-Llauro C."/>
            <person name="Purnelle B."/>
            <person name="Masuy D."/>
            <person name="de Haan M."/>
            <person name="Maarse A.C."/>
            <person name="Alcaraz J.-P."/>
            <person name="Cottet A."/>
            <person name="Casacuberta E."/>
            <person name="Monfort A."/>
            <person name="Argiriou A."/>
            <person name="Flores M."/>
            <person name="Liguori R."/>
            <person name="Vitale D."/>
            <person name="Mannhaupt G."/>
            <person name="Haase D."/>
            <person name="Schoof H."/>
            <person name="Rudd S."/>
            <person name="Zaccaria P."/>
            <person name="Mewes H.-W."/>
            <person name="Mayer K.F.X."/>
            <person name="Kaul S."/>
            <person name="Town C.D."/>
            <person name="Koo H.L."/>
            <person name="Tallon L.J."/>
            <person name="Jenkins J."/>
            <person name="Rooney T."/>
            <person name="Rizzo M."/>
            <person name="Walts A."/>
            <person name="Utterback T."/>
            <person name="Fujii C.Y."/>
            <person name="Shea T.P."/>
            <person name="Creasy T.H."/>
            <person name="Haas B."/>
            <person name="Maiti R."/>
            <person name="Wu D."/>
            <person name="Peterson J."/>
            <person name="Van Aken S."/>
            <person name="Pai G."/>
            <person name="Militscher J."/>
            <person name="Sellers P."/>
            <person name="Gill J.E."/>
            <person name="Feldblyum T.V."/>
            <person name="Preuss D."/>
            <person name="Lin X."/>
            <person name="Nierman W.C."/>
            <person name="Salzberg S.L."/>
            <person name="White O."/>
            <person name="Venter J.C."/>
            <person name="Fraser C.M."/>
            <person name="Kaneko T."/>
            <person name="Nakamura Y."/>
            <person name="Sato S."/>
            <person name="Kato T."/>
            <person name="Asamizu E."/>
            <person name="Sasamoto S."/>
            <person name="Kimura T."/>
            <person name="Idesawa K."/>
            <person name="Kawashima K."/>
            <person name="Kishida Y."/>
            <person name="Kiyokawa C."/>
            <person name="Kohara M."/>
            <person name="Matsumoto M."/>
            <person name="Matsuno A."/>
            <person name="Muraki A."/>
            <person name="Nakayama S."/>
            <person name="Nakazaki N."/>
            <person name="Shinpo S."/>
            <person name="Takeuchi C."/>
            <person name="Wada T."/>
            <person name="Watanabe A."/>
            <person name="Yamada M."/>
            <person name="Yasuda M."/>
            <person name="Tabata S."/>
        </authorList>
    </citation>
    <scope>NUCLEOTIDE SEQUENCE [LARGE SCALE GENOMIC DNA]</scope>
    <source>
        <strain>cv. Columbia</strain>
    </source>
</reference>
<reference key="2">
    <citation type="journal article" date="2017" name="Plant J.">
        <title>Araport11: a complete reannotation of the Arabidopsis thaliana reference genome.</title>
        <authorList>
            <person name="Cheng C.Y."/>
            <person name="Krishnakumar V."/>
            <person name="Chan A.P."/>
            <person name="Thibaud-Nissen F."/>
            <person name="Schobel S."/>
            <person name="Town C.D."/>
        </authorList>
    </citation>
    <scope>GENOME REANNOTATION</scope>
    <source>
        <strain>cv. Columbia</strain>
    </source>
</reference>
<reference key="3">
    <citation type="submission" date="2004-06" db="EMBL/GenBank/DDBJ databases">
        <authorList>
            <person name="Underwood B.A."/>
            <person name="Xiao Y.-L."/>
            <person name="Moskal W.A. Jr."/>
            <person name="Monaghan E.L."/>
            <person name="Wang W."/>
            <person name="Redman J.C."/>
            <person name="Wu H.C."/>
            <person name="Utterback T."/>
            <person name="Town C.D."/>
        </authorList>
    </citation>
    <scope>NUCLEOTIDE SEQUENCE [LARGE SCALE GENOMIC DNA]</scope>
    <source>
        <strain>cv. Columbia</strain>
    </source>
</reference>
<reference key="4">
    <citation type="journal article" date="2005" name="Plant Physiol.">
        <title>Analysis of the cDNAs of hypothetical genes on Arabidopsis chromosome 2 reveals numerous transcript variants.</title>
        <authorList>
            <person name="Xiao Y.-L."/>
            <person name="Smith S.R."/>
            <person name="Ishmael N."/>
            <person name="Redman J.C."/>
            <person name="Kumar N."/>
            <person name="Monaghan E.L."/>
            <person name="Ayele M."/>
            <person name="Haas B.J."/>
            <person name="Wu H.C."/>
            <person name="Town C.D."/>
        </authorList>
    </citation>
    <scope>NUCLEOTIDE SEQUENCE [LARGE SCALE MRNA]</scope>
    <source>
        <strain>cv. Columbia</strain>
    </source>
</reference>
<reference key="5">
    <citation type="journal article" date="2010" name="Plant Biol. 12 Suppl.">
        <title>Expression, localisation and phylogeny of a novel family of plant-specific membrane proteins.</title>
        <authorList>
            <person name="Kasaras A."/>
            <person name="Kunze R."/>
        </authorList>
    </citation>
    <scope>SUBCELLULAR LOCATION</scope>
    <scope>GENE FAMILY</scope>
    <scope>NOMENCLATURE</scope>
    <source>
        <strain>cv. Columbia</strain>
    </source>
</reference>
<comment type="function">
    <text evidence="1">Involved in membrane remodeling.</text>
</comment>
<comment type="subcellular location">
    <subcellularLocation>
        <location evidence="4">Endoplasmic reticulum membrane</location>
        <topology evidence="2">Multi-pass membrane protein</topology>
    </subcellularLocation>
</comment>
<comment type="similarity">
    <text evidence="6">Belongs to the plant DMP1 protein family.</text>
</comment>
<organism>
    <name type="scientific">Arabidopsis thaliana</name>
    <name type="common">Mouse-ear cress</name>
    <dbReference type="NCBI Taxonomy" id="3702"/>
    <lineage>
        <taxon>Eukaryota</taxon>
        <taxon>Viridiplantae</taxon>
        <taxon>Streptophyta</taxon>
        <taxon>Embryophyta</taxon>
        <taxon>Tracheophyta</taxon>
        <taxon>Spermatophyta</taxon>
        <taxon>Magnoliopsida</taxon>
        <taxon>eudicotyledons</taxon>
        <taxon>Gunneridae</taxon>
        <taxon>Pentapetalae</taxon>
        <taxon>rosids</taxon>
        <taxon>malvids</taxon>
        <taxon>Brassicales</taxon>
        <taxon>Brassicaceae</taxon>
        <taxon>Camelineae</taxon>
        <taxon>Arabidopsis</taxon>
    </lineage>
</organism>
<dbReference type="EMBL" id="AC021640">
    <property type="protein sequence ID" value="AAF32450.1"/>
    <property type="molecule type" value="Genomic_DNA"/>
</dbReference>
<dbReference type="EMBL" id="CP002686">
    <property type="protein sequence ID" value="AEE73807.1"/>
    <property type="molecule type" value="Genomic_DNA"/>
</dbReference>
<dbReference type="EMBL" id="AY649286">
    <property type="protein sequence ID" value="AAT69203.1"/>
    <property type="molecule type" value="Genomic_DNA"/>
</dbReference>
<dbReference type="EMBL" id="AY600558">
    <property type="protein sequence ID" value="AAT68357.1"/>
    <property type="molecule type" value="mRNA"/>
</dbReference>
<dbReference type="RefSeq" id="NP_186892.1">
    <property type="nucleotide sequence ID" value="NM_111110.3"/>
</dbReference>
<dbReference type="PaxDb" id="3702-AT3G02430.1"/>
<dbReference type="EnsemblPlants" id="AT3G02430.1">
    <property type="protein sequence ID" value="AT3G02430.1"/>
    <property type="gene ID" value="AT3G02430"/>
</dbReference>
<dbReference type="GeneID" id="821304"/>
<dbReference type="Gramene" id="AT3G02430.1">
    <property type="protein sequence ID" value="AT3G02430.1"/>
    <property type="gene ID" value="AT3G02430"/>
</dbReference>
<dbReference type="KEGG" id="ath:AT3G02430"/>
<dbReference type="Araport" id="AT3G02430"/>
<dbReference type="TAIR" id="AT3G02430">
    <property type="gene designation" value="DMP5"/>
</dbReference>
<dbReference type="eggNOG" id="ENOG502RYBP">
    <property type="taxonomic scope" value="Eukaryota"/>
</dbReference>
<dbReference type="HOGENOM" id="CLU_075936_2_1_1"/>
<dbReference type="InParanoid" id="Q9M897"/>
<dbReference type="OMA" id="DKYVTDC"/>
<dbReference type="PhylomeDB" id="Q9M897"/>
<dbReference type="PRO" id="PR:Q9M897"/>
<dbReference type="Proteomes" id="UP000006548">
    <property type="component" value="Chromosome 3"/>
</dbReference>
<dbReference type="ExpressionAtlas" id="Q9M897">
    <property type="expression patterns" value="baseline and differential"/>
</dbReference>
<dbReference type="GO" id="GO:0005783">
    <property type="term" value="C:endoplasmic reticulum"/>
    <property type="evidence" value="ECO:0000314"/>
    <property type="project" value="TAIR"/>
</dbReference>
<dbReference type="GO" id="GO:0005789">
    <property type="term" value="C:endoplasmic reticulum membrane"/>
    <property type="evidence" value="ECO:0007669"/>
    <property type="project" value="UniProtKB-SubCell"/>
</dbReference>
<dbReference type="GO" id="GO:0010256">
    <property type="term" value="P:endomembrane system organization"/>
    <property type="evidence" value="ECO:0000250"/>
    <property type="project" value="UniProtKB"/>
</dbReference>
<dbReference type="InterPro" id="IPR007770">
    <property type="entry name" value="DMP"/>
</dbReference>
<dbReference type="PANTHER" id="PTHR31621">
    <property type="entry name" value="PROTEIN DMP3"/>
    <property type="match status" value="1"/>
</dbReference>
<dbReference type="PANTHER" id="PTHR31621:SF1">
    <property type="entry name" value="PROTEIN DMP5"/>
    <property type="match status" value="1"/>
</dbReference>
<dbReference type="Pfam" id="PF05078">
    <property type="entry name" value="DUF679"/>
    <property type="match status" value="1"/>
</dbReference>
<proteinExistence type="evidence at transcript level"/>
<name>DMP5_ARATH</name>
<gene>
    <name evidence="5" type="primary">DMP5</name>
    <name evidence="7" type="ordered locus">At3g02430</name>
    <name evidence="8" type="ORF">F16B3.6</name>
</gene>
<sequence length="219" mass="24070">MSALRLRNANTPAPELDELSDQTPSESRVLKRQMSMSQRAMSNTLTSAANLSNLLPTGTLLAFQLLTPVFTSNGVCDHATRFLTAVLLFLLAASCFVSSFTDSVKADDGTIYFGFVTFKGMWVVDYPDPSGLGLPDLAKYRMRFVDWIHATLSVLVFGAVALRDKYITDCFYPSPEAETKHVLDIVPVGVGVMCSLLFMVFPARRHGIGYLVTGSVDRR</sequence>